<organism>
    <name type="scientific">Mycobacterium bovis (strain ATCC BAA-935 / AF2122/97)</name>
    <dbReference type="NCBI Taxonomy" id="233413"/>
    <lineage>
        <taxon>Bacteria</taxon>
        <taxon>Bacillati</taxon>
        <taxon>Actinomycetota</taxon>
        <taxon>Actinomycetes</taxon>
        <taxon>Mycobacteriales</taxon>
        <taxon>Mycobacteriaceae</taxon>
        <taxon>Mycobacterium</taxon>
        <taxon>Mycobacterium tuberculosis complex</taxon>
    </lineage>
</organism>
<proteinExistence type="inferred from homology"/>
<gene>
    <name evidence="1" type="primary">ppa</name>
    <name type="ordered locus">BQ2027_MB3652</name>
</gene>
<dbReference type="EC" id="3.6.1.1" evidence="1"/>
<dbReference type="EMBL" id="LT708304">
    <property type="protein sequence ID" value="SIU02280.1"/>
    <property type="molecule type" value="Genomic_DNA"/>
</dbReference>
<dbReference type="RefSeq" id="NP_857291.1">
    <property type="nucleotide sequence ID" value="NC_002945.3"/>
</dbReference>
<dbReference type="RefSeq" id="WP_003419577.1">
    <property type="nucleotide sequence ID" value="NC_002945.4"/>
</dbReference>
<dbReference type="SMR" id="P65747"/>
<dbReference type="KEGG" id="mbo:BQ2027_MB3652"/>
<dbReference type="PATRIC" id="fig|233413.5.peg.3997"/>
<dbReference type="Proteomes" id="UP000001419">
    <property type="component" value="Chromosome"/>
</dbReference>
<dbReference type="GO" id="GO:0005737">
    <property type="term" value="C:cytoplasm"/>
    <property type="evidence" value="ECO:0007669"/>
    <property type="project" value="UniProtKB-SubCell"/>
</dbReference>
<dbReference type="GO" id="GO:0004427">
    <property type="term" value="F:inorganic diphosphate phosphatase activity"/>
    <property type="evidence" value="ECO:0007669"/>
    <property type="project" value="UniProtKB-UniRule"/>
</dbReference>
<dbReference type="GO" id="GO:0000287">
    <property type="term" value="F:magnesium ion binding"/>
    <property type="evidence" value="ECO:0007669"/>
    <property type="project" value="UniProtKB-UniRule"/>
</dbReference>
<dbReference type="GO" id="GO:0006796">
    <property type="term" value="P:phosphate-containing compound metabolic process"/>
    <property type="evidence" value="ECO:0007669"/>
    <property type="project" value="InterPro"/>
</dbReference>
<dbReference type="CDD" id="cd00412">
    <property type="entry name" value="pyrophosphatase"/>
    <property type="match status" value="1"/>
</dbReference>
<dbReference type="FunFam" id="3.90.80.10:FF:000003">
    <property type="entry name" value="Inorganic pyrophosphatase"/>
    <property type="match status" value="1"/>
</dbReference>
<dbReference type="Gene3D" id="3.90.80.10">
    <property type="entry name" value="Inorganic pyrophosphatase"/>
    <property type="match status" value="1"/>
</dbReference>
<dbReference type="HAMAP" id="MF_00209">
    <property type="entry name" value="Inorganic_PPase"/>
    <property type="match status" value="1"/>
</dbReference>
<dbReference type="InterPro" id="IPR008162">
    <property type="entry name" value="Pyrophosphatase"/>
</dbReference>
<dbReference type="InterPro" id="IPR036649">
    <property type="entry name" value="Pyrophosphatase_sf"/>
</dbReference>
<dbReference type="PANTHER" id="PTHR10286">
    <property type="entry name" value="INORGANIC PYROPHOSPHATASE"/>
    <property type="match status" value="1"/>
</dbReference>
<dbReference type="Pfam" id="PF00719">
    <property type="entry name" value="Pyrophosphatase"/>
    <property type="match status" value="1"/>
</dbReference>
<dbReference type="SUPFAM" id="SSF50324">
    <property type="entry name" value="Inorganic pyrophosphatase"/>
    <property type="match status" value="1"/>
</dbReference>
<dbReference type="PROSITE" id="PS00387">
    <property type="entry name" value="PPASE"/>
    <property type="match status" value="1"/>
</dbReference>
<keyword id="KW-0963">Cytoplasm</keyword>
<keyword id="KW-0378">Hydrolase</keyword>
<keyword id="KW-0460">Magnesium</keyword>
<keyword id="KW-0479">Metal-binding</keyword>
<keyword id="KW-1185">Reference proteome</keyword>
<comment type="function">
    <text evidence="1">Catalyzes the hydrolysis of inorganic pyrophosphate (PPi) forming two phosphate ions.</text>
</comment>
<comment type="catalytic activity">
    <reaction evidence="1">
        <text>diphosphate + H2O = 2 phosphate + H(+)</text>
        <dbReference type="Rhea" id="RHEA:24576"/>
        <dbReference type="ChEBI" id="CHEBI:15377"/>
        <dbReference type="ChEBI" id="CHEBI:15378"/>
        <dbReference type="ChEBI" id="CHEBI:33019"/>
        <dbReference type="ChEBI" id="CHEBI:43474"/>
        <dbReference type="EC" id="3.6.1.1"/>
    </reaction>
</comment>
<comment type="cofactor">
    <cofactor evidence="1">
        <name>Mg(2+)</name>
        <dbReference type="ChEBI" id="CHEBI:18420"/>
    </cofactor>
</comment>
<comment type="subunit">
    <text evidence="1">Homohexamer.</text>
</comment>
<comment type="subcellular location">
    <subcellularLocation>
        <location evidence="1">Cytoplasm</location>
    </subcellularLocation>
</comment>
<comment type="similarity">
    <text evidence="1">Belongs to the PPase family.</text>
</comment>
<accession>P65747</accession>
<accession>A0A1R3Y4N5</accession>
<accession>O06379</accession>
<accession>X2BP74</accession>
<name>IPYR_MYCBO</name>
<evidence type="ECO:0000255" key="1">
    <source>
        <dbReference type="HAMAP-Rule" id="MF_00209"/>
    </source>
</evidence>
<feature type="chain" id="PRO_0000137513" description="Inorganic pyrophosphatase">
    <location>
        <begin position="1"/>
        <end position="162"/>
    </location>
</feature>
<feature type="active site" description="Proton acceptor" evidence="1">
    <location>
        <position position="89"/>
    </location>
</feature>
<feature type="binding site" evidence="1">
    <location>
        <position position="8"/>
    </location>
    <ligand>
        <name>Mg(2+)</name>
        <dbReference type="ChEBI" id="CHEBI:18420"/>
        <label>2</label>
    </ligand>
</feature>
<feature type="binding site" evidence="1">
    <location>
        <position position="16"/>
    </location>
    <ligand>
        <name>substrate</name>
    </ligand>
</feature>
<feature type="binding site" evidence="1">
    <location>
        <position position="30"/>
    </location>
    <ligand>
        <name>substrate</name>
    </ligand>
</feature>
<feature type="binding site" evidence="1">
    <location>
        <position position="42"/>
    </location>
    <ligand>
        <name>substrate</name>
    </ligand>
</feature>
<feature type="binding site" evidence="1">
    <location>
        <position position="52"/>
    </location>
    <ligand>
        <name>Mg(2+)</name>
        <dbReference type="ChEBI" id="CHEBI:18420"/>
        <label>1</label>
    </ligand>
</feature>
<feature type="binding site" evidence="1">
    <location>
        <position position="57"/>
    </location>
    <ligand>
        <name>Mg(2+)</name>
        <dbReference type="ChEBI" id="CHEBI:18420"/>
        <label>1</label>
    </ligand>
</feature>
<feature type="binding site" evidence="1">
    <location>
        <position position="57"/>
    </location>
    <ligand>
        <name>Mg(2+)</name>
        <dbReference type="ChEBI" id="CHEBI:18420"/>
        <label>2</label>
    </ligand>
</feature>
<feature type="binding site" evidence="1">
    <location>
        <position position="84"/>
    </location>
    <ligand>
        <name>Mg(2+)</name>
        <dbReference type="ChEBI" id="CHEBI:18420"/>
        <label>3</label>
    </ligand>
</feature>
<feature type="binding site" evidence="1">
    <location>
        <position position="89"/>
    </location>
    <ligand>
        <name>Mg(2+)</name>
        <dbReference type="ChEBI" id="CHEBI:18420"/>
        <label>1</label>
    </ligand>
</feature>
<feature type="binding site" evidence="1">
    <location>
        <position position="89"/>
    </location>
    <ligand>
        <name>Mg(2+)</name>
        <dbReference type="ChEBI" id="CHEBI:18420"/>
        <label>3</label>
    </ligand>
</feature>
<feature type="binding site" evidence="1">
    <location>
        <position position="126"/>
    </location>
    <ligand>
        <name>substrate</name>
    </ligand>
</feature>
<protein>
    <recommendedName>
        <fullName evidence="1">Inorganic pyrophosphatase</fullName>
        <ecNumber evidence="1">3.6.1.1</ecNumber>
    </recommendedName>
    <alternativeName>
        <fullName evidence="1">Pyrophosphate phospho-hydrolase</fullName>
        <shortName evidence="1">PPase</shortName>
    </alternativeName>
</protein>
<reference key="1">
    <citation type="journal article" date="2003" name="Proc. Natl. Acad. Sci. U.S.A.">
        <title>The complete genome sequence of Mycobacterium bovis.</title>
        <authorList>
            <person name="Garnier T."/>
            <person name="Eiglmeier K."/>
            <person name="Camus J.-C."/>
            <person name="Medina N."/>
            <person name="Mansoor H."/>
            <person name="Pryor M."/>
            <person name="Duthoy S."/>
            <person name="Grondin S."/>
            <person name="Lacroix C."/>
            <person name="Monsempe C."/>
            <person name="Simon S."/>
            <person name="Harris B."/>
            <person name="Atkin R."/>
            <person name="Doggett J."/>
            <person name="Mayes R."/>
            <person name="Keating L."/>
            <person name="Wheeler P.R."/>
            <person name="Parkhill J."/>
            <person name="Barrell B.G."/>
            <person name="Cole S.T."/>
            <person name="Gordon S.V."/>
            <person name="Hewinson R.G."/>
        </authorList>
    </citation>
    <scope>NUCLEOTIDE SEQUENCE [LARGE SCALE GENOMIC DNA]</scope>
    <source>
        <strain>ATCC BAA-935 / AF2122/97</strain>
    </source>
</reference>
<reference key="2">
    <citation type="journal article" date="2017" name="Genome Announc.">
        <title>Updated reference genome sequence and annotation of Mycobacterium bovis AF2122/97.</title>
        <authorList>
            <person name="Malone K.M."/>
            <person name="Farrell D."/>
            <person name="Stuber T.P."/>
            <person name="Schubert O.T."/>
            <person name="Aebersold R."/>
            <person name="Robbe-Austerman S."/>
            <person name="Gordon S.V."/>
        </authorList>
    </citation>
    <scope>NUCLEOTIDE SEQUENCE [LARGE SCALE GENOMIC DNA]</scope>
    <scope>GENOME REANNOTATION</scope>
    <source>
        <strain>ATCC BAA-935 / AF2122/97</strain>
    </source>
</reference>
<sequence length="162" mass="18329">MQFDVTIEIPKGQRNKYEVDHETGRVRLDRYLYTPMAYPTDYGFIEDTLGDDGDPLDALVLLPQPVFPGVLVAARPVGMFRMVDEHGGDDKVLCVPAGDPRWDHVQDIGDVPAFELDAIKHFFVHYKDLEPGKFVKAADWVDRAEAEAEVQRSVERFKAGTH</sequence>